<keyword id="KW-0175">Coiled coil</keyword>
<keyword id="KW-1185">Reference proteome</keyword>
<evidence type="ECO:0000255" key="1"/>
<evidence type="ECO:0000256" key="2">
    <source>
        <dbReference type="SAM" id="MobiDB-lite"/>
    </source>
</evidence>
<evidence type="ECO:0000305" key="3"/>
<accession>Q5UP93</accession>
<organism>
    <name type="scientific">Acanthamoeba polyphaga mimivirus</name>
    <name type="common">APMV</name>
    <dbReference type="NCBI Taxonomy" id="212035"/>
    <lineage>
        <taxon>Viruses</taxon>
        <taxon>Varidnaviria</taxon>
        <taxon>Bamfordvirae</taxon>
        <taxon>Nucleocytoviricota</taxon>
        <taxon>Megaviricetes</taxon>
        <taxon>Imitervirales</taxon>
        <taxon>Mimiviridae</taxon>
        <taxon>Megamimivirinae</taxon>
        <taxon>Mimivirus</taxon>
        <taxon>Mimivirus bradfordmassiliense</taxon>
    </lineage>
</organism>
<comment type="similarity">
    <text evidence="3">Belongs to the mimivirus L17/R827 family.</text>
</comment>
<protein>
    <recommendedName>
        <fullName>Uncharacterized protein L17</fullName>
    </recommendedName>
</protein>
<feature type="chain" id="PRO_0000071179" description="Uncharacterized protein L17">
    <location>
        <begin position="1"/>
        <end position="356"/>
    </location>
</feature>
<feature type="region of interest" description="Disordered" evidence="2">
    <location>
        <begin position="25"/>
        <end position="72"/>
    </location>
</feature>
<feature type="coiled-coil region" evidence="1">
    <location>
        <begin position="328"/>
        <end position="356"/>
    </location>
</feature>
<feature type="compositionally biased region" description="Basic and acidic residues" evidence="2">
    <location>
        <begin position="31"/>
        <end position="50"/>
    </location>
</feature>
<feature type="compositionally biased region" description="Acidic residues" evidence="2">
    <location>
        <begin position="51"/>
        <end position="70"/>
    </location>
</feature>
<proteinExistence type="inferred from homology"/>
<dbReference type="EMBL" id="AY653733">
    <property type="protein sequence ID" value="AAV50292.1"/>
    <property type="molecule type" value="Genomic_DNA"/>
</dbReference>
<dbReference type="KEGG" id="vg:9924594"/>
<dbReference type="OrthoDB" id="30668at10239"/>
<dbReference type="Proteomes" id="UP000001134">
    <property type="component" value="Genome"/>
</dbReference>
<reference key="1">
    <citation type="journal article" date="2004" name="Science">
        <title>The 1.2-megabase genome sequence of Mimivirus.</title>
        <authorList>
            <person name="Raoult D."/>
            <person name="Audic S."/>
            <person name="Robert C."/>
            <person name="Abergel C."/>
            <person name="Renesto P."/>
            <person name="Ogata H."/>
            <person name="La Scola B."/>
            <person name="Susan M."/>
            <person name="Claverie J.-M."/>
        </authorList>
    </citation>
    <scope>NUCLEOTIDE SEQUENCE [LARGE SCALE GENOMIC DNA]</scope>
    <source>
        <strain>Rowbotham-Bradford</strain>
    </source>
</reference>
<organismHost>
    <name type="scientific">Acanthamoeba polyphaga</name>
    <name type="common">Amoeba</name>
    <dbReference type="NCBI Taxonomy" id="5757"/>
</organismHost>
<sequence>MTTIISGLRFRGKICDENRVTETIEENNQENNKKFIEEFYPDKESDKNFSDDDSDDSDDSDDSENSDEEFDNKFTEKKPIGQYINIIDKMCRNKSDKEFLRKTIKNSIGYFDWTVQDRDKIYDFTQKKFGFKKLVCVKDNMEPIIELLALVLIPDSVDIIKSKNSNYKNQIKTDIMYVHSLFVLQNSNSEILDKDFANNLPQYQIPIDFFSKYYCVEGTGDMKRYYPSALIKKSFVKGITFFLDFNDAQKIKIMDDLDKLSISNLKKREIATAMFILNLESMINDSIINEKRALEKLKALTKGNLIGIVNHLNNMKIGRDVIEMMIIEDTLNHSHSNKIKELENKITELKYQNEIN</sequence>
<gene>
    <name type="ordered locus">MIMI_L17</name>
</gene>
<name>YL017_MIMIV</name>